<accession>Q5Z1V5</accession>
<feature type="chain" id="PRO_1000007543" description="Large ribosomal subunit protein uL29">
    <location>
        <begin position="1"/>
        <end position="79"/>
    </location>
</feature>
<keyword id="KW-1185">Reference proteome</keyword>
<keyword id="KW-0687">Ribonucleoprotein</keyword>
<keyword id="KW-0689">Ribosomal protein</keyword>
<organism>
    <name type="scientific">Nocardia farcinica (strain IFM 10152)</name>
    <dbReference type="NCBI Taxonomy" id="247156"/>
    <lineage>
        <taxon>Bacteria</taxon>
        <taxon>Bacillati</taxon>
        <taxon>Actinomycetota</taxon>
        <taxon>Actinomycetes</taxon>
        <taxon>Mycobacteriales</taxon>
        <taxon>Nocardiaceae</taxon>
        <taxon>Nocardia</taxon>
    </lineage>
</organism>
<protein>
    <recommendedName>
        <fullName evidence="1">Large ribosomal subunit protein uL29</fullName>
    </recommendedName>
    <alternativeName>
        <fullName evidence="2">50S ribosomal protein L29</fullName>
    </alternativeName>
</protein>
<dbReference type="EMBL" id="AP006618">
    <property type="protein sequence ID" value="BAD55586.1"/>
    <property type="molecule type" value="Genomic_DNA"/>
</dbReference>
<dbReference type="RefSeq" id="WP_011207272.1">
    <property type="nucleotide sequence ID" value="NC_006361.1"/>
</dbReference>
<dbReference type="SMR" id="Q5Z1V5"/>
<dbReference type="STRING" id="247156.NFA_7410"/>
<dbReference type="GeneID" id="61131572"/>
<dbReference type="KEGG" id="nfa:NFA_7410"/>
<dbReference type="eggNOG" id="COG0255">
    <property type="taxonomic scope" value="Bacteria"/>
</dbReference>
<dbReference type="HOGENOM" id="CLU_158491_3_3_11"/>
<dbReference type="OrthoDB" id="9815192at2"/>
<dbReference type="Proteomes" id="UP000006820">
    <property type="component" value="Chromosome"/>
</dbReference>
<dbReference type="GO" id="GO:0022625">
    <property type="term" value="C:cytosolic large ribosomal subunit"/>
    <property type="evidence" value="ECO:0007669"/>
    <property type="project" value="TreeGrafter"/>
</dbReference>
<dbReference type="GO" id="GO:0003735">
    <property type="term" value="F:structural constituent of ribosome"/>
    <property type="evidence" value="ECO:0007669"/>
    <property type="project" value="InterPro"/>
</dbReference>
<dbReference type="GO" id="GO:0006412">
    <property type="term" value="P:translation"/>
    <property type="evidence" value="ECO:0007669"/>
    <property type="project" value="UniProtKB-UniRule"/>
</dbReference>
<dbReference type="CDD" id="cd00427">
    <property type="entry name" value="Ribosomal_L29_HIP"/>
    <property type="match status" value="1"/>
</dbReference>
<dbReference type="FunFam" id="1.10.287.310:FF:000001">
    <property type="entry name" value="50S ribosomal protein L29"/>
    <property type="match status" value="1"/>
</dbReference>
<dbReference type="Gene3D" id="1.10.287.310">
    <property type="match status" value="1"/>
</dbReference>
<dbReference type="HAMAP" id="MF_00374">
    <property type="entry name" value="Ribosomal_uL29"/>
    <property type="match status" value="1"/>
</dbReference>
<dbReference type="InterPro" id="IPR050063">
    <property type="entry name" value="Ribosomal_protein_uL29"/>
</dbReference>
<dbReference type="InterPro" id="IPR001854">
    <property type="entry name" value="Ribosomal_uL29"/>
</dbReference>
<dbReference type="InterPro" id="IPR018254">
    <property type="entry name" value="Ribosomal_uL29_CS"/>
</dbReference>
<dbReference type="InterPro" id="IPR036049">
    <property type="entry name" value="Ribosomal_uL29_sf"/>
</dbReference>
<dbReference type="NCBIfam" id="TIGR00012">
    <property type="entry name" value="L29"/>
    <property type="match status" value="1"/>
</dbReference>
<dbReference type="PANTHER" id="PTHR10916">
    <property type="entry name" value="60S RIBOSOMAL PROTEIN L35/50S RIBOSOMAL PROTEIN L29"/>
    <property type="match status" value="1"/>
</dbReference>
<dbReference type="PANTHER" id="PTHR10916:SF0">
    <property type="entry name" value="LARGE RIBOSOMAL SUBUNIT PROTEIN UL29C"/>
    <property type="match status" value="1"/>
</dbReference>
<dbReference type="Pfam" id="PF00831">
    <property type="entry name" value="Ribosomal_L29"/>
    <property type="match status" value="1"/>
</dbReference>
<dbReference type="SUPFAM" id="SSF46561">
    <property type="entry name" value="Ribosomal protein L29 (L29p)"/>
    <property type="match status" value="1"/>
</dbReference>
<dbReference type="PROSITE" id="PS00579">
    <property type="entry name" value="RIBOSOMAL_L29"/>
    <property type="match status" value="1"/>
</dbReference>
<sequence length="79" mass="8941">MATGTPAAELRELTEEELVSRLRESKEELFNLRFQMATGQLDNNRRLRVVRHEIARIYTVMRERELGLATGPAGKGDAA</sequence>
<name>RL29_NOCFA</name>
<reference key="1">
    <citation type="journal article" date="2004" name="Proc. Natl. Acad. Sci. U.S.A.">
        <title>The complete genomic sequence of Nocardia farcinica IFM 10152.</title>
        <authorList>
            <person name="Ishikawa J."/>
            <person name="Yamashita A."/>
            <person name="Mikami Y."/>
            <person name="Hoshino Y."/>
            <person name="Kurita H."/>
            <person name="Hotta K."/>
            <person name="Shiba T."/>
            <person name="Hattori M."/>
        </authorList>
    </citation>
    <scope>NUCLEOTIDE SEQUENCE [LARGE SCALE GENOMIC DNA]</scope>
    <source>
        <strain>IFM 10152</strain>
    </source>
</reference>
<proteinExistence type="inferred from homology"/>
<gene>
    <name evidence="1" type="primary">rpmC</name>
    <name type="ordered locus">NFA_7410</name>
</gene>
<comment type="similarity">
    <text evidence="1">Belongs to the universal ribosomal protein uL29 family.</text>
</comment>
<evidence type="ECO:0000255" key="1">
    <source>
        <dbReference type="HAMAP-Rule" id="MF_00374"/>
    </source>
</evidence>
<evidence type="ECO:0000305" key="2"/>